<feature type="chain" id="PRO_0000313280" description="DNA ligase">
    <location>
        <begin position="1"/>
        <end position="672"/>
    </location>
</feature>
<feature type="domain" description="BRCT" evidence="1">
    <location>
        <begin position="592"/>
        <end position="672"/>
    </location>
</feature>
<feature type="active site" description="N6-AMP-lysine intermediate" evidence="1">
    <location>
        <position position="115"/>
    </location>
</feature>
<feature type="binding site" evidence="1">
    <location>
        <begin position="34"/>
        <end position="38"/>
    </location>
    <ligand>
        <name>NAD(+)</name>
        <dbReference type="ChEBI" id="CHEBI:57540"/>
    </ligand>
</feature>
<feature type="binding site" evidence="1">
    <location>
        <begin position="83"/>
        <end position="84"/>
    </location>
    <ligand>
        <name>NAD(+)</name>
        <dbReference type="ChEBI" id="CHEBI:57540"/>
    </ligand>
</feature>
<feature type="binding site" evidence="1">
    <location>
        <position position="113"/>
    </location>
    <ligand>
        <name>NAD(+)</name>
        <dbReference type="ChEBI" id="CHEBI:57540"/>
    </ligand>
</feature>
<feature type="binding site" evidence="1">
    <location>
        <position position="136"/>
    </location>
    <ligand>
        <name>NAD(+)</name>
        <dbReference type="ChEBI" id="CHEBI:57540"/>
    </ligand>
</feature>
<feature type="binding site" evidence="1">
    <location>
        <position position="170"/>
    </location>
    <ligand>
        <name>NAD(+)</name>
        <dbReference type="ChEBI" id="CHEBI:57540"/>
    </ligand>
</feature>
<feature type="binding site" evidence="1">
    <location>
        <position position="286"/>
    </location>
    <ligand>
        <name>NAD(+)</name>
        <dbReference type="ChEBI" id="CHEBI:57540"/>
    </ligand>
</feature>
<feature type="binding site" evidence="1">
    <location>
        <position position="310"/>
    </location>
    <ligand>
        <name>NAD(+)</name>
        <dbReference type="ChEBI" id="CHEBI:57540"/>
    </ligand>
</feature>
<feature type="binding site" evidence="1">
    <location>
        <position position="404"/>
    </location>
    <ligand>
        <name>Zn(2+)</name>
        <dbReference type="ChEBI" id="CHEBI:29105"/>
    </ligand>
</feature>
<feature type="binding site" evidence="1">
    <location>
        <position position="407"/>
    </location>
    <ligand>
        <name>Zn(2+)</name>
        <dbReference type="ChEBI" id="CHEBI:29105"/>
    </ligand>
</feature>
<feature type="binding site" evidence="1">
    <location>
        <position position="422"/>
    </location>
    <ligand>
        <name>Zn(2+)</name>
        <dbReference type="ChEBI" id="CHEBI:29105"/>
    </ligand>
</feature>
<feature type="binding site" evidence="1">
    <location>
        <position position="427"/>
    </location>
    <ligand>
        <name>Zn(2+)</name>
        <dbReference type="ChEBI" id="CHEBI:29105"/>
    </ligand>
</feature>
<comment type="function">
    <text evidence="1">DNA ligase that catalyzes the formation of phosphodiester linkages between 5'-phosphoryl and 3'-hydroxyl groups in double-stranded DNA using NAD as a coenzyme and as the energy source for the reaction. It is essential for DNA replication and repair of damaged DNA.</text>
</comment>
<comment type="catalytic activity">
    <reaction evidence="1">
        <text>NAD(+) + (deoxyribonucleotide)n-3'-hydroxyl + 5'-phospho-(deoxyribonucleotide)m = (deoxyribonucleotide)n+m + AMP + beta-nicotinamide D-nucleotide.</text>
        <dbReference type="EC" id="6.5.1.2"/>
    </reaction>
</comment>
<comment type="cofactor">
    <cofactor evidence="1">
        <name>Mg(2+)</name>
        <dbReference type="ChEBI" id="CHEBI:18420"/>
    </cofactor>
    <cofactor evidence="1">
        <name>Mn(2+)</name>
        <dbReference type="ChEBI" id="CHEBI:29035"/>
    </cofactor>
</comment>
<comment type="similarity">
    <text evidence="1">Belongs to the NAD-dependent DNA ligase family. LigA subfamily.</text>
</comment>
<protein>
    <recommendedName>
        <fullName evidence="1">DNA ligase</fullName>
        <ecNumber evidence="1">6.5.1.2</ecNumber>
    </recommendedName>
    <alternativeName>
        <fullName evidence="1">Polydeoxyribonucleotide synthase [NAD(+)]</fullName>
    </alternativeName>
</protein>
<gene>
    <name evidence="1" type="primary">ligA</name>
    <name type="ordered locus">LSL_1348</name>
</gene>
<dbReference type="EC" id="6.5.1.2" evidence="1"/>
<dbReference type="EMBL" id="CP000233">
    <property type="protein sequence ID" value="ABE00153.1"/>
    <property type="molecule type" value="Genomic_DNA"/>
</dbReference>
<dbReference type="RefSeq" id="WP_011476297.1">
    <property type="nucleotide sequence ID" value="NC_007929.1"/>
</dbReference>
<dbReference type="RefSeq" id="YP_536236.1">
    <property type="nucleotide sequence ID" value="NC_007929.1"/>
</dbReference>
<dbReference type="SMR" id="Q1WSH6"/>
<dbReference type="STRING" id="362948.LSL_1348"/>
<dbReference type="KEGG" id="lsl:LSL_1348"/>
<dbReference type="PATRIC" id="fig|362948.14.peg.1423"/>
<dbReference type="HOGENOM" id="CLU_007764_2_1_9"/>
<dbReference type="OrthoDB" id="9759736at2"/>
<dbReference type="Proteomes" id="UP000006559">
    <property type="component" value="Chromosome"/>
</dbReference>
<dbReference type="GO" id="GO:0005829">
    <property type="term" value="C:cytosol"/>
    <property type="evidence" value="ECO:0007669"/>
    <property type="project" value="TreeGrafter"/>
</dbReference>
<dbReference type="GO" id="GO:0003911">
    <property type="term" value="F:DNA ligase (NAD+) activity"/>
    <property type="evidence" value="ECO:0007669"/>
    <property type="project" value="UniProtKB-UniRule"/>
</dbReference>
<dbReference type="GO" id="GO:0046872">
    <property type="term" value="F:metal ion binding"/>
    <property type="evidence" value="ECO:0007669"/>
    <property type="project" value="UniProtKB-KW"/>
</dbReference>
<dbReference type="GO" id="GO:0006281">
    <property type="term" value="P:DNA repair"/>
    <property type="evidence" value="ECO:0007669"/>
    <property type="project" value="UniProtKB-KW"/>
</dbReference>
<dbReference type="GO" id="GO:0006260">
    <property type="term" value="P:DNA replication"/>
    <property type="evidence" value="ECO:0007669"/>
    <property type="project" value="UniProtKB-KW"/>
</dbReference>
<dbReference type="CDD" id="cd17748">
    <property type="entry name" value="BRCT_DNA_ligase_like"/>
    <property type="match status" value="1"/>
</dbReference>
<dbReference type="CDD" id="cd00114">
    <property type="entry name" value="LIGANc"/>
    <property type="match status" value="1"/>
</dbReference>
<dbReference type="FunFam" id="1.10.150.20:FF:000006">
    <property type="entry name" value="DNA ligase"/>
    <property type="match status" value="1"/>
</dbReference>
<dbReference type="FunFam" id="1.10.150.20:FF:000007">
    <property type="entry name" value="DNA ligase"/>
    <property type="match status" value="1"/>
</dbReference>
<dbReference type="FunFam" id="2.40.50.140:FF:000012">
    <property type="entry name" value="DNA ligase"/>
    <property type="match status" value="1"/>
</dbReference>
<dbReference type="FunFam" id="3.30.470.30:FF:000001">
    <property type="entry name" value="DNA ligase"/>
    <property type="match status" value="1"/>
</dbReference>
<dbReference type="Gene3D" id="6.20.10.30">
    <property type="match status" value="1"/>
</dbReference>
<dbReference type="Gene3D" id="1.10.150.20">
    <property type="entry name" value="5' to 3' exonuclease, C-terminal subdomain"/>
    <property type="match status" value="2"/>
</dbReference>
<dbReference type="Gene3D" id="3.40.50.10190">
    <property type="entry name" value="BRCT domain"/>
    <property type="match status" value="1"/>
</dbReference>
<dbReference type="Gene3D" id="3.30.470.30">
    <property type="entry name" value="DNA ligase/mRNA capping enzyme"/>
    <property type="match status" value="1"/>
</dbReference>
<dbReference type="Gene3D" id="1.10.287.610">
    <property type="entry name" value="Helix hairpin bin"/>
    <property type="match status" value="1"/>
</dbReference>
<dbReference type="Gene3D" id="2.40.50.140">
    <property type="entry name" value="Nucleic acid-binding proteins"/>
    <property type="match status" value="1"/>
</dbReference>
<dbReference type="HAMAP" id="MF_01588">
    <property type="entry name" value="DNA_ligase_A"/>
    <property type="match status" value="1"/>
</dbReference>
<dbReference type="InterPro" id="IPR001357">
    <property type="entry name" value="BRCT_dom"/>
</dbReference>
<dbReference type="InterPro" id="IPR036420">
    <property type="entry name" value="BRCT_dom_sf"/>
</dbReference>
<dbReference type="InterPro" id="IPR041663">
    <property type="entry name" value="DisA/LigA_HHH"/>
</dbReference>
<dbReference type="InterPro" id="IPR001679">
    <property type="entry name" value="DNA_ligase"/>
</dbReference>
<dbReference type="InterPro" id="IPR018239">
    <property type="entry name" value="DNA_ligase_AS"/>
</dbReference>
<dbReference type="InterPro" id="IPR033136">
    <property type="entry name" value="DNA_ligase_CS"/>
</dbReference>
<dbReference type="InterPro" id="IPR013839">
    <property type="entry name" value="DNAligase_adenylation"/>
</dbReference>
<dbReference type="InterPro" id="IPR013840">
    <property type="entry name" value="DNAligase_N"/>
</dbReference>
<dbReference type="InterPro" id="IPR012340">
    <property type="entry name" value="NA-bd_OB-fold"/>
</dbReference>
<dbReference type="InterPro" id="IPR004150">
    <property type="entry name" value="NAD_DNA_ligase_OB"/>
</dbReference>
<dbReference type="InterPro" id="IPR010994">
    <property type="entry name" value="RuvA_2-like"/>
</dbReference>
<dbReference type="InterPro" id="IPR004149">
    <property type="entry name" value="Znf_DNAligase_C4"/>
</dbReference>
<dbReference type="NCBIfam" id="TIGR00575">
    <property type="entry name" value="dnlj"/>
    <property type="match status" value="1"/>
</dbReference>
<dbReference type="NCBIfam" id="NF005932">
    <property type="entry name" value="PRK07956.1"/>
    <property type="match status" value="1"/>
</dbReference>
<dbReference type="PANTHER" id="PTHR23389">
    <property type="entry name" value="CHROMOSOME TRANSMISSION FIDELITY FACTOR 18"/>
    <property type="match status" value="1"/>
</dbReference>
<dbReference type="PANTHER" id="PTHR23389:SF9">
    <property type="entry name" value="DNA LIGASE"/>
    <property type="match status" value="1"/>
</dbReference>
<dbReference type="Pfam" id="PF00533">
    <property type="entry name" value="BRCT"/>
    <property type="match status" value="1"/>
</dbReference>
<dbReference type="Pfam" id="PF01653">
    <property type="entry name" value="DNA_ligase_aden"/>
    <property type="match status" value="1"/>
</dbReference>
<dbReference type="Pfam" id="PF03120">
    <property type="entry name" value="DNA_ligase_OB"/>
    <property type="match status" value="1"/>
</dbReference>
<dbReference type="Pfam" id="PF03119">
    <property type="entry name" value="DNA_ligase_ZBD"/>
    <property type="match status" value="1"/>
</dbReference>
<dbReference type="Pfam" id="PF12826">
    <property type="entry name" value="HHH_2"/>
    <property type="match status" value="1"/>
</dbReference>
<dbReference type="PIRSF" id="PIRSF001604">
    <property type="entry name" value="LigA"/>
    <property type="match status" value="1"/>
</dbReference>
<dbReference type="SMART" id="SM00292">
    <property type="entry name" value="BRCT"/>
    <property type="match status" value="1"/>
</dbReference>
<dbReference type="SMART" id="SM00532">
    <property type="entry name" value="LIGANc"/>
    <property type="match status" value="1"/>
</dbReference>
<dbReference type="SUPFAM" id="SSF52113">
    <property type="entry name" value="BRCT domain"/>
    <property type="match status" value="1"/>
</dbReference>
<dbReference type="SUPFAM" id="SSF56091">
    <property type="entry name" value="DNA ligase/mRNA capping enzyme, catalytic domain"/>
    <property type="match status" value="1"/>
</dbReference>
<dbReference type="SUPFAM" id="SSF50249">
    <property type="entry name" value="Nucleic acid-binding proteins"/>
    <property type="match status" value="1"/>
</dbReference>
<dbReference type="SUPFAM" id="SSF47781">
    <property type="entry name" value="RuvA domain 2-like"/>
    <property type="match status" value="1"/>
</dbReference>
<dbReference type="PROSITE" id="PS50172">
    <property type="entry name" value="BRCT"/>
    <property type="match status" value="1"/>
</dbReference>
<dbReference type="PROSITE" id="PS01055">
    <property type="entry name" value="DNA_LIGASE_N1"/>
    <property type="match status" value="1"/>
</dbReference>
<dbReference type="PROSITE" id="PS01056">
    <property type="entry name" value="DNA_LIGASE_N2"/>
    <property type="match status" value="1"/>
</dbReference>
<accession>Q1WSH6</accession>
<organism>
    <name type="scientific">Ligilactobacillus salivarius (strain UCC118)</name>
    <name type="common">Lactobacillus salivarius</name>
    <dbReference type="NCBI Taxonomy" id="362948"/>
    <lineage>
        <taxon>Bacteria</taxon>
        <taxon>Bacillati</taxon>
        <taxon>Bacillota</taxon>
        <taxon>Bacilli</taxon>
        <taxon>Lactobacillales</taxon>
        <taxon>Lactobacillaceae</taxon>
        <taxon>Ligilactobacillus</taxon>
    </lineage>
</organism>
<name>DNLJ_LIGS1</name>
<proteinExistence type="inferred from homology"/>
<reference key="1">
    <citation type="journal article" date="2006" name="Proc. Natl. Acad. Sci. U.S.A.">
        <title>Multireplicon genome architecture of Lactobacillus salivarius.</title>
        <authorList>
            <person name="Claesson M.J."/>
            <person name="Li Y."/>
            <person name="Leahy S."/>
            <person name="Canchaya C."/>
            <person name="van Pijkeren J.P."/>
            <person name="Cerdeno-Tarraga A.M."/>
            <person name="Parkhill J."/>
            <person name="Flynn S."/>
            <person name="O'Sullivan G.C."/>
            <person name="Collins J.K."/>
            <person name="Higgins D."/>
            <person name="Shanahan F."/>
            <person name="Fitzgerald G.F."/>
            <person name="van Sinderen D."/>
            <person name="O'Toole P.W."/>
        </authorList>
    </citation>
    <scope>NUCLEOTIDE SEQUENCE [LARGE SCALE GENOMIC DNA]</scope>
    <source>
        <strain>UCC118</strain>
    </source>
</reference>
<keyword id="KW-0227">DNA damage</keyword>
<keyword id="KW-0234">DNA repair</keyword>
<keyword id="KW-0235">DNA replication</keyword>
<keyword id="KW-0436">Ligase</keyword>
<keyword id="KW-0460">Magnesium</keyword>
<keyword id="KW-0464">Manganese</keyword>
<keyword id="KW-0479">Metal-binding</keyword>
<keyword id="KW-0520">NAD</keyword>
<keyword id="KW-1185">Reference proteome</keyword>
<keyword id="KW-0862">Zinc</keyword>
<sequence length="672" mass="75169">MSQKDIEMELKELRNKLNRWSNEYYVLDTPSVEDSVYDKHYQRLLELEQANPDLVTADSPSQRVGGKVLSGFTKVSHDIPMLSLGDVFSKEELIEFLERLENSVEQKLDYSCELKIDGLAISLTYENGKFIKGSTRGNGVIGEDITENLKTIKAIPMELNEPVSIEVRGECYMPKKSFVELNTKREAEGQAVFANPRNAAAGSLRQLDTKITASRNLSTFIYYLMEPEKLGIKTQTEALNKLESWGFKVNNESKQVKTKEEIFAYIDKATDQRANLPYDIDGIVLKAESFAVQSQVGNTVKVPRWAIAYKFPPDEQETKVLDIEWTVGRTGVVTPTAVMEPVTLAGTTVARASLHNPDYLKEKDIRIGDTVKLHKAGDIIPEISEVVLAKRTEDSVEYQIPTECPECGAKLVHLDDEVALRCINPQCPALVKESLTHFASRNAMDIRGLGPRIIEQLYNREMIKDVAGIYSLTFEQLITLDKFKEKSANNLLTAIDNSRNNSIERLIFGLGIRHVGAKVARILAENYKSMDNLAKAKSDEISTIDSLGKIIGDSVEMYFADEHVMELLDELRQAGVNLEFLGKTREEQLESSTDSSFNGLRVVLTGTLDTLKRSEAKSWLEAHGAKVTGSVSKKTDLLIAGHDAGSKLTKAQELNVRVMNEAEFIQQMEEES</sequence>
<evidence type="ECO:0000255" key="1">
    <source>
        <dbReference type="HAMAP-Rule" id="MF_01588"/>
    </source>
</evidence>